<protein>
    <recommendedName>
        <fullName evidence="1">Cobyric acid synthase</fullName>
    </recommendedName>
</protein>
<accession>Q3IZR0</accession>
<organism>
    <name type="scientific">Cereibacter sphaeroides (strain ATCC 17023 / DSM 158 / JCM 6121 / CCUG 31486 / LMG 2827 / NBRC 12203 / NCIMB 8253 / ATH 2.4.1.)</name>
    <name type="common">Rhodobacter sphaeroides</name>
    <dbReference type="NCBI Taxonomy" id="272943"/>
    <lineage>
        <taxon>Bacteria</taxon>
        <taxon>Pseudomonadati</taxon>
        <taxon>Pseudomonadota</taxon>
        <taxon>Alphaproteobacteria</taxon>
        <taxon>Rhodobacterales</taxon>
        <taxon>Paracoccaceae</taxon>
        <taxon>Cereibacter</taxon>
    </lineage>
</organism>
<proteinExistence type="inferred from homology"/>
<comment type="function">
    <text evidence="1">Catalyzes amidations at positions B, D, E, and G on adenosylcobyrinic A,C-diamide. NH(2) groups are provided by glutamine, and one molecule of ATP is hydrogenolyzed for each amidation.</text>
</comment>
<comment type="pathway">
    <text evidence="1">Cofactor biosynthesis; adenosylcobalamin biosynthesis.</text>
</comment>
<comment type="similarity">
    <text evidence="1">Belongs to the CobB/CobQ family. CobQ subfamily.</text>
</comment>
<feature type="chain" id="PRO_0000332380" description="Cobyric acid synthase">
    <location>
        <begin position="1"/>
        <end position="481"/>
    </location>
</feature>
<feature type="domain" description="GATase cobBQ-type" evidence="1">
    <location>
        <begin position="248"/>
        <end position="435"/>
    </location>
</feature>
<feature type="active site" description="Nucleophile" evidence="1">
    <location>
        <position position="330"/>
    </location>
</feature>
<feature type="active site" evidence="1">
    <location>
        <position position="427"/>
    </location>
</feature>
<keyword id="KW-0169">Cobalamin biosynthesis</keyword>
<keyword id="KW-0315">Glutamine amidotransferase</keyword>
<keyword id="KW-1185">Reference proteome</keyword>
<reference key="1">
    <citation type="submission" date="2005-09" db="EMBL/GenBank/DDBJ databases">
        <title>Complete sequence of chromosome 1 of Rhodobacter sphaeroides 2.4.1.</title>
        <authorList>
            <person name="Copeland A."/>
            <person name="Lucas S."/>
            <person name="Lapidus A."/>
            <person name="Barry K."/>
            <person name="Detter J.C."/>
            <person name="Glavina T."/>
            <person name="Hammon N."/>
            <person name="Israni S."/>
            <person name="Pitluck S."/>
            <person name="Richardson P."/>
            <person name="Mackenzie C."/>
            <person name="Choudhary M."/>
            <person name="Larimer F."/>
            <person name="Hauser L.J."/>
            <person name="Land M."/>
            <person name="Donohue T.J."/>
            <person name="Kaplan S."/>
        </authorList>
    </citation>
    <scope>NUCLEOTIDE SEQUENCE [LARGE SCALE GENOMIC DNA]</scope>
    <source>
        <strain>ATCC 17023 / DSM 158 / JCM 6121 / CCUG 31486 / LMG 2827 / NBRC 12203 / NCIMB 8253 / ATH 2.4.1.</strain>
    </source>
</reference>
<name>COBQ_CERS4</name>
<gene>
    <name evidence="1" type="primary">cobQ</name>
    <name type="ordered locus">RHOS4_24060</name>
    <name type="ORF">RSP_0796</name>
</gene>
<dbReference type="EMBL" id="CP000143">
    <property type="protein sequence ID" value="ABA79974.1"/>
    <property type="molecule type" value="Genomic_DNA"/>
</dbReference>
<dbReference type="RefSeq" id="WP_011338494.1">
    <property type="nucleotide sequence ID" value="NC_007493.2"/>
</dbReference>
<dbReference type="RefSeq" id="YP_353875.1">
    <property type="nucleotide sequence ID" value="NC_007493.2"/>
</dbReference>
<dbReference type="SMR" id="Q3IZR0"/>
<dbReference type="STRING" id="272943.RSP_0796"/>
<dbReference type="EnsemblBacteria" id="ABA79974">
    <property type="protein sequence ID" value="ABA79974"/>
    <property type="gene ID" value="RSP_0796"/>
</dbReference>
<dbReference type="GeneID" id="3718413"/>
<dbReference type="KEGG" id="rsp:RSP_0796"/>
<dbReference type="PATRIC" id="fig|272943.9.peg.2755"/>
<dbReference type="eggNOG" id="COG1492">
    <property type="taxonomic scope" value="Bacteria"/>
</dbReference>
<dbReference type="OrthoDB" id="9808302at2"/>
<dbReference type="PhylomeDB" id="Q3IZR0"/>
<dbReference type="UniPathway" id="UPA00148"/>
<dbReference type="Proteomes" id="UP000002703">
    <property type="component" value="Chromosome 1"/>
</dbReference>
<dbReference type="GO" id="GO:0015420">
    <property type="term" value="F:ABC-type vitamin B12 transporter activity"/>
    <property type="evidence" value="ECO:0007669"/>
    <property type="project" value="UniProtKB-UniRule"/>
</dbReference>
<dbReference type="GO" id="GO:0003824">
    <property type="term" value="F:catalytic activity"/>
    <property type="evidence" value="ECO:0007669"/>
    <property type="project" value="InterPro"/>
</dbReference>
<dbReference type="GO" id="GO:0009236">
    <property type="term" value="P:cobalamin biosynthetic process"/>
    <property type="evidence" value="ECO:0007669"/>
    <property type="project" value="UniProtKB-UniRule"/>
</dbReference>
<dbReference type="CDD" id="cd05389">
    <property type="entry name" value="CobQ_N"/>
    <property type="match status" value="1"/>
</dbReference>
<dbReference type="CDD" id="cd01750">
    <property type="entry name" value="GATase1_CobQ"/>
    <property type="match status" value="1"/>
</dbReference>
<dbReference type="Gene3D" id="3.40.50.880">
    <property type="match status" value="1"/>
</dbReference>
<dbReference type="Gene3D" id="3.40.50.300">
    <property type="entry name" value="P-loop containing nucleotide triphosphate hydrolases"/>
    <property type="match status" value="1"/>
</dbReference>
<dbReference type="HAMAP" id="MF_00028">
    <property type="entry name" value="CobQ"/>
    <property type="match status" value="1"/>
</dbReference>
<dbReference type="InterPro" id="IPR029062">
    <property type="entry name" value="Class_I_gatase-like"/>
</dbReference>
<dbReference type="InterPro" id="IPR002586">
    <property type="entry name" value="CobQ/CobB/MinD/ParA_Nub-bd_dom"/>
</dbReference>
<dbReference type="InterPro" id="IPR033949">
    <property type="entry name" value="CobQ_GATase1"/>
</dbReference>
<dbReference type="InterPro" id="IPR047045">
    <property type="entry name" value="CobQ_N"/>
</dbReference>
<dbReference type="InterPro" id="IPR004459">
    <property type="entry name" value="CobQ_synth"/>
</dbReference>
<dbReference type="InterPro" id="IPR011698">
    <property type="entry name" value="GATase_3"/>
</dbReference>
<dbReference type="InterPro" id="IPR027417">
    <property type="entry name" value="P-loop_NTPase"/>
</dbReference>
<dbReference type="NCBIfam" id="TIGR00313">
    <property type="entry name" value="cobQ"/>
    <property type="match status" value="1"/>
</dbReference>
<dbReference type="NCBIfam" id="NF001989">
    <property type="entry name" value="PRK00784.1"/>
    <property type="match status" value="1"/>
</dbReference>
<dbReference type="PANTHER" id="PTHR21343:SF1">
    <property type="entry name" value="COBYRIC ACID SYNTHASE"/>
    <property type="match status" value="1"/>
</dbReference>
<dbReference type="PANTHER" id="PTHR21343">
    <property type="entry name" value="DETHIOBIOTIN SYNTHETASE"/>
    <property type="match status" value="1"/>
</dbReference>
<dbReference type="Pfam" id="PF01656">
    <property type="entry name" value="CbiA"/>
    <property type="match status" value="1"/>
</dbReference>
<dbReference type="Pfam" id="PF07685">
    <property type="entry name" value="GATase_3"/>
    <property type="match status" value="1"/>
</dbReference>
<dbReference type="SUPFAM" id="SSF52317">
    <property type="entry name" value="Class I glutamine amidotransferase-like"/>
    <property type="match status" value="1"/>
</dbReference>
<dbReference type="SUPFAM" id="SSF52540">
    <property type="entry name" value="P-loop containing nucleoside triphosphate hydrolases"/>
    <property type="match status" value="1"/>
</dbReference>
<dbReference type="PROSITE" id="PS51274">
    <property type="entry name" value="GATASE_COBBQ"/>
    <property type="match status" value="1"/>
</dbReference>
<sequence length="481" mass="50883">MPAVMIQGTGSDVGKSLLVAGLCRAARRRGLSVAPFKPQNMSNNAAVTADGGEIGRAQALQARASGLEPLTDMNPVLLKPESDHGSQVIVQGRRVGTLRARDWFERKPALMAPVLESFARLTAAHDLVIVEGAGSPAEVNLRRGDIANMGFARTAGVPVVLAGDIDRGGVIAQLVGTQAVIDPEDAAMIAGFLVNKFRGDVRLFDEGYRLIEARTGWRGYGVVPFFPEAALLPAEDALDLGRPTGQGALTVAWLAFSRVANFDDLDPLKQEPGLTVRMVRPGQPIPAEADLVILPGTKSTRGDLAFLRAQGWDVDLRAHHRRGGRVLGICGGYQMLGRSVADPEGLEGAPGVTEGLGLLDVETVMHPDKRLTRVAGRHRASGAELTGYEIHIGATEGPDCARPFAEIEGRPEGATSADGRVVGSYLHGMFGADGFRRAFLESLGAATSDLAYDARVETVLDALADHLETHVDVAGLLALAR</sequence>
<evidence type="ECO:0000255" key="1">
    <source>
        <dbReference type="HAMAP-Rule" id="MF_00028"/>
    </source>
</evidence>